<keyword id="KW-0067">ATP-binding</keyword>
<keyword id="KW-0227">DNA damage</keyword>
<keyword id="KW-0234">DNA repair</keyword>
<keyword id="KW-0238">DNA-binding</keyword>
<keyword id="KW-0269">Exonuclease</keyword>
<keyword id="KW-0347">Helicase</keyword>
<keyword id="KW-0378">Hydrolase</keyword>
<keyword id="KW-0413">Isomerase</keyword>
<keyword id="KW-0540">Nuclease</keyword>
<keyword id="KW-0547">Nucleotide-binding</keyword>
<sequence length="1279" mass="150210">MSSTKWTDEQRQAVFTKNCNLLVAAGAGAGKTAVLVQRIIEKILDKEEPIDIDKLLVVTFTNAAAAEMRERIGDAISKGLDENPESKALRKQLTLLNKSNIMTIHSFCLQIIKNNFHTIEIDPNFRICDETEGILMKQEAMDELFDELYEIENKDFINLVESYASRKDTRLQEVVLELHRFAKSAPFPYDWLLNMAEEFNVGEEFNFEETLWADMIMEDMKVLLHGFKNMLQQSIDVILNSEGIDYYYEPFKMDLNFINSLLEKSSFKEFRGEIIAYDFPKLPLKRNKDADKEAKERVKKLRDRVKKKILEIKNILNSYENEFIKKEFIFLYPSMKALSNLVILFDKKYEAKKRERDLIDFNDIEHLCLSILTDKDSEDHIIPSDTALDYRKKFTEVLIDEYQDSNLVQEVIMSMVSRVKGYWSFYNGQLMFNEEEINLEEPHIGLDIPNRFMVGDVKQSIYRFRQAKPEIFLDKYNEYSEEESIKNRKVKLFKNFRSREEVINGVNYLFKQIMSKTIGELDYTEEEALKVGASYGEEVKGEPIELCLMDKKYEISEEVLKEYNMDEEEALDNIQLEGRLVAKKIQKLVGNNLEGGLKVFDKKLGEYRNLQYRDIVILMRATSNWAPVFVEELAKEGIPVFADTNSGYFNTTEIKTIISLLQIIDNPLQDIPLLSVLRSPIASFTDDELIDIRMVNKNIAFYECMEIIYKLYKDEELDSYYSFYMEDEDKTNKIVKDIKEELKNKICSFIEKLNLWRKKSIHIDIDEFIWFLYVETGYYGYVGALPAGEQRQANLRILFQRAKQYEKTSYKGLFNFINFINKLKFSSGDMGSAKILGENENVVRIMSIHKSKGLEFPVVILSGTGKNFNMMDLNKNILFHRDLGYGPDYVDTERRIAYPSLVKNIIKNKIRLETLSEEMRILYVALTRAREKLIITGLINNMDKTVEDWLNLSDDKNKVPEYAVMSGKTYLDWIGPALIKHKDAVSLREELKITSGLSNIVDDKSKWKIELWNKKELLKEKVEENEVEISEKIKETLMNLGESNYKEEIYKKLSFKYKYDNASSIPTKLSVSDVKKQFILDEKENTEELFKKVELRKPMFMGEEKKISPSERGTIIHLFMQHLDLKKAENEEDIKEQINRLIEREFITYEQSKIINPYKILKFCRSELGKRMINSNNINREMPFSIEVPAVEIYRELDKDIYKDEKLIIQGIIDCYFEEEEGLVLLDYKTDYVNDIEEIKNRYEIQIKYYEEALNRITGKNVKDKYLYLFSVDNYIKID</sequence>
<feature type="chain" id="PRO_0000379254" description="ATP-dependent helicase/nuclease subunit A">
    <location>
        <begin position="1"/>
        <end position="1279"/>
    </location>
</feature>
<feature type="domain" description="UvrD-like helicase ATP-binding" evidence="1">
    <location>
        <begin position="4"/>
        <end position="499"/>
    </location>
</feature>
<feature type="domain" description="UvrD-like helicase C-terminal" evidence="1">
    <location>
        <begin position="526"/>
        <end position="853"/>
    </location>
</feature>
<feature type="binding site" evidence="1">
    <location>
        <begin position="25"/>
        <end position="32"/>
    </location>
    <ligand>
        <name>ATP</name>
        <dbReference type="ChEBI" id="CHEBI:30616"/>
    </ligand>
</feature>
<organism>
    <name type="scientific">Clostridium botulinum (strain Loch Maree / Type A3)</name>
    <dbReference type="NCBI Taxonomy" id="498214"/>
    <lineage>
        <taxon>Bacteria</taxon>
        <taxon>Bacillati</taxon>
        <taxon>Bacillota</taxon>
        <taxon>Clostridia</taxon>
        <taxon>Eubacteriales</taxon>
        <taxon>Clostridiaceae</taxon>
        <taxon>Clostridium</taxon>
    </lineage>
</organism>
<protein>
    <recommendedName>
        <fullName evidence="1">ATP-dependent helicase/nuclease subunit A</fullName>
        <ecNumber evidence="1">3.1.-.-</ecNumber>
        <ecNumber evidence="1">5.6.2.4</ecNumber>
    </recommendedName>
    <alternativeName>
        <fullName evidence="1">ATP-dependent helicase/nuclease AddA</fullName>
    </alternativeName>
    <alternativeName>
        <fullName evidence="1">DNA 3'-5' helicase AddA</fullName>
    </alternativeName>
</protein>
<accession>B1KUZ8</accession>
<gene>
    <name evidence="1" type="primary">addA</name>
    <name type="ordered locus">CLK_3638</name>
</gene>
<comment type="function">
    <text evidence="1">The heterodimer acts as both an ATP-dependent DNA helicase and an ATP-dependent, dual-direction single-stranded exonuclease. Recognizes the chi site generating a DNA molecule suitable for the initiation of homologous recombination. The AddA nuclease domain is required for chi fragment generation; this subunit has the helicase and 3' -&gt; 5' nuclease activities.</text>
</comment>
<comment type="catalytic activity">
    <reaction evidence="1">
        <text>Couples ATP hydrolysis with the unwinding of duplex DNA by translocating in the 3'-5' direction.</text>
        <dbReference type="EC" id="5.6.2.4"/>
    </reaction>
</comment>
<comment type="catalytic activity">
    <reaction evidence="1">
        <text>ATP + H2O = ADP + phosphate + H(+)</text>
        <dbReference type="Rhea" id="RHEA:13065"/>
        <dbReference type="ChEBI" id="CHEBI:15377"/>
        <dbReference type="ChEBI" id="CHEBI:15378"/>
        <dbReference type="ChEBI" id="CHEBI:30616"/>
        <dbReference type="ChEBI" id="CHEBI:43474"/>
        <dbReference type="ChEBI" id="CHEBI:456216"/>
        <dbReference type="EC" id="5.6.2.4"/>
    </reaction>
</comment>
<comment type="cofactor">
    <cofactor evidence="1">
        <name>Mg(2+)</name>
        <dbReference type="ChEBI" id="CHEBI:18420"/>
    </cofactor>
</comment>
<comment type="subunit">
    <text evidence="1">Heterodimer of AddA and AddB/RexB.</text>
</comment>
<comment type="similarity">
    <text evidence="1">Belongs to the helicase family. AddA subfamily.</text>
</comment>
<reference key="1">
    <citation type="journal article" date="2007" name="PLoS ONE">
        <title>Analysis of the neurotoxin complex genes in Clostridium botulinum A1-A4 and B1 strains: BoNT/A3, /Ba4 and /B1 clusters are located within plasmids.</title>
        <authorList>
            <person name="Smith T.J."/>
            <person name="Hill K.K."/>
            <person name="Foley B.T."/>
            <person name="Detter J.C."/>
            <person name="Munk A.C."/>
            <person name="Bruce D.C."/>
            <person name="Doggett N.A."/>
            <person name="Smith L.A."/>
            <person name="Marks J.D."/>
            <person name="Xie G."/>
            <person name="Brettin T.S."/>
        </authorList>
    </citation>
    <scope>NUCLEOTIDE SEQUENCE [LARGE SCALE GENOMIC DNA]</scope>
    <source>
        <strain>Loch Maree / Type A3</strain>
    </source>
</reference>
<evidence type="ECO:0000255" key="1">
    <source>
        <dbReference type="HAMAP-Rule" id="MF_01451"/>
    </source>
</evidence>
<name>ADDA_CLOBM</name>
<dbReference type="EC" id="3.1.-.-" evidence="1"/>
<dbReference type="EC" id="5.6.2.4" evidence="1"/>
<dbReference type="EMBL" id="CP000962">
    <property type="protein sequence ID" value="ACA55236.1"/>
    <property type="molecule type" value="Genomic_DNA"/>
</dbReference>
<dbReference type="RefSeq" id="WP_012343244.1">
    <property type="nucleotide sequence ID" value="NC_010520.1"/>
</dbReference>
<dbReference type="SMR" id="B1KUZ8"/>
<dbReference type="KEGG" id="cbl:CLK_3638"/>
<dbReference type="HOGENOM" id="CLU_001114_3_1_9"/>
<dbReference type="GO" id="GO:0005829">
    <property type="term" value="C:cytosol"/>
    <property type="evidence" value="ECO:0007669"/>
    <property type="project" value="TreeGrafter"/>
</dbReference>
<dbReference type="GO" id="GO:0033202">
    <property type="term" value="C:DNA helicase complex"/>
    <property type="evidence" value="ECO:0007669"/>
    <property type="project" value="TreeGrafter"/>
</dbReference>
<dbReference type="GO" id="GO:0043138">
    <property type="term" value="F:3'-5' DNA helicase activity"/>
    <property type="evidence" value="ECO:0007669"/>
    <property type="project" value="UniProtKB-UniRule"/>
</dbReference>
<dbReference type="GO" id="GO:0008408">
    <property type="term" value="F:3'-5' exonuclease activity"/>
    <property type="evidence" value="ECO:0007669"/>
    <property type="project" value="UniProtKB-UniRule"/>
</dbReference>
<dbReference type="GO" id="GO:0005524">
    <property type="term" value="F:ATP binding"/>
    <property type="evidence" value="ECO:0007669"/>
    <property type="project" value="UniProtKB-UniRule"/>
</dbReference>
<dbReference type="GO" id="GO:0016887">
    <property type="term" value="F:ATP hydrolysis activity"/>
    <property type="evidence" value="ECO:0007669"/>
    <property type="project" value="RHEA"/>
</dbReference>
<dbReference type="GO" id="GO:0003690">
    <property type="term" value="F:double-stranded DNA binding"/>
    <property type="evidence" value="ECO:0007669"/>
    <property type="project" value="UniProtKB-UniRule"/>
</dbReference>
<dbReference type="GO" id="GO:0000724">
    <property type="term" value="P:double-strand break repair via homologous recombination"/>
    <property type="evidence" value="ECO:0007669"/>
    <property type="project" value="UniProtKB-UniRule"/>
</dbReference>
<dbReference type="FunFam" id="3.40.50.300:FF:001164">
    <property type="entry name" value="ATP-dependent helicase/nuclease subunit A"/>
    <property type="match status" value="1"/>
</dbReference>
<dbReference type="FunFam" id="3.40.50.300:FF:001196">
    <property type="entry name" value="ATP-dependent helicase/nuclease subunit A"/>
    <property type="match status" value="1"/>
</dbReference>
<dbReference type="FunFam" id="3.40.50.300:FF:001236">
    <property type="entry name" value="ATP-dependent helicase/nuclease subunit A"/>
    <property type="match status" value="1"/>
</dbReference>
<dbReference type="Gene3D" id="3.90.320.10">
    <property type="match status" value="1"/>
</dbReference>
<dbReference type="Gene3D" id="3.40.50.300">
    <property type="entry name" value="P-loop containing nucleotide triphosphate hydrolases"/>
    <property type="match status" value="4"/>
</dbReference>
<dbReference type="HAMAP" id="MF_01451">
    <property type="entry name" value="AddA"/>
    <property type="match status" value="1"/>
</dbReference>
<dbReference type="InterPro" id="IPR014152">
    <property type="entry name" value="AddA"/>
</dbReference>
<dbReference type="InterPro" id="IPR014017">
    <property type="entry name" value="DNA_helicase_UvrD-like_C"/>
</dbReference>
<dbReference type="InterPro" id="IPR000212">
    <property type="entry name" value="DNA_helicase_UvrD/REP"/>
</dbReference>
<dbReference type="InterPro" id="IPR027417">
    <property type="entry name" value="P-loop_NTPase"/>
</dbReference>
<dbReference type="InterPro" id="IPR011604">
    <property type="entry name" value="PDDEXK-like_dom_sf"/>
</dbReference>
<dbReference type="InterPro" id="IPR038726">
    <property type="entry name" value="PDDEXK_AddAB-type"/>
</dbReference>
<dbReference type="InterPro" id="IPR011335">
    <property type="entry name" value="Restrct_endonuc-II-like"/>
</dbReference>
<dbReference type="InterPro" id="IPR014016">
    <property type="entry name" value="UvrD-like_ATP-bd"/>
</dbReference>
<dbReference type="NCBIfam" id="TIGR02785">
    <property type="entry name" value="addA_Gpos"/>
    <property type="match status" value="1"/>
</dbReference>
<dbReference type="PANTHER" id="PTHR11070:SF48">
    <property type="entry name" value="ATP-DEPENDENT HELICASE_NUCLEASE SUBUNIT A"/>
    <property type="match status" value="1"/>
</dbReference>
<dbReference type="PANTHER" id="PTHR11070">
    <property type="entry name" value="UVRD / RECB / PCRA DNA HELICASE FAMILY MEMBER"/>
    <property type="match status" value="1"/>
</dbReference>
<dbReference type="Pfam" id="PF12705">
    <property type="entry name" value="PDDEXK_1"/>
    <property type="match status" value="1"/>
</dbReference>
<dbReference type="Pfam" id="PF00580">
    <property type="entry name" value="UvrD-helicase"/>
    <property type="match status" value="1"/>
</dbReference>
<dbReference type="Pfam" id="PF13361">
    <property type="entry name" value="UvrD_C"/>
    <property type="match status" value="1"/>
</dbReference>
<dbReference type="SUPFAM" id="SSF52540">
    <property type="entry name" value="P-loop containing nucleoside triphosphate hydrolases"/>
    <property type="match status" value="1"/>
</dbReference>
<dbReference type="SUPFAM" id="SSF52980">
    <property type="entry name" value="Restriction endonuclease-like"/>
    <property type="match status" value="1"/>
</dbReference>
<dbReference type="PROSITE" id="PS51198">
    <property type="entry name" value="UVRD_HELICASE_ATP_BIND"/>
    <property type="match status" value="1"/>
</dbReference>
<dbReference type="PROSITE" id="PS51217">
    <property type="entry name" value="UVRD_HELICASE_CTER"/>
    <property type="match status" value="1"/>
</dbReference>
<proteinExistence type="inferred from homology"/>